<reference key="1">
    <citation type="journal article" date="2002" name="Proc. Natl. Acad. Sci. U.S.A.">
        <title>Extensive mosaic structure revealed by the complete genome sequence of uropathogenic Escherichia coli.</title>
        <authorList>
            <person name="Welch R.A."/>
            <person name="Burland V."/>
            <person name="Plunkett G. III"/>
            <person name="Redford P."/>
            <person name="Roesch P."/>
            <person name="Rasko D."/>
            <person name="Buckles E.L."/>
            <person name="Liou S.-R."/>
            <person name="Boutin A."/>
            <person name="Hackett J."/>
            <person name="Stroud D."/>
            <person name="Mayhew G.F."/>
            <person name="Rose D.J."/>
            <person name="Zhou S."/>
            <person name="Schwartz D.C."/>
            <person name="Perna N.T."/>
            <person name="Mobley H.L.T."/>
            <person name="Donnenberg M.S."/>
            <person name="Blattner F.R."/>
        </authorList>
    </citation>
    <scope>NUCLEOTIDE SEQUENCE [LARGE SCALE GENOMIC DNA]</scope>
    <source>
        <strain>CFT073 / ATCC 700928 / UPEC</strain>
    </source>
</reference>
<comment type="function">
    <text evidence="1">May function as a transcriptional regulator that controls feoABC expression.</text>
</comment>
<comment type="similarity">
    <text evidence="1">Belongs to the FeoC family.</text>
</comment>
<comment type="sequence caution" evidence="2">
    <conflict type="erroneous initiation">
        <sequence resource="EMBL-CDS" id="AAN82625"/>
    </conflict>
</comment>
<dbReference type="EMBL" id="AE014075">
    <property type="protein sequence ID" value="AAN82625.1"/>
    <property type="status" value="ALT_INIT"/>
    <property type="molecule type" value="Genomic_DNA"/>
</dbReference>
<dbReference type="RefSeq" id="WP_000157585.1">
    <property type="nucleotide sequence ID" value="NZ_CP051263.1"/>
</dbReference>
<dbReference type="SMR" id="Q8FCT6"/>
<dbReference type="STRING" id="199310.c4187"/>
<dbReference type="KEGG" id="ecc:c4187"/>
<dbReference type="eggNOG" id="ENOG50330S2">
    <property type="taxonomic scope" value="Bacteria"/>
</dbReference>
<dbReference type="HOGENOM" id="CLU_189182_0_0_6"/>
<dbReference type="Proteomes" id="UP000001410">
    <property type="component" value="Chromosome"/>
</dbReference>
<dbReference type="GO" id="GO:0003677">
    <property type="term" value="F:DNA binding"/>
    <property type="evidence" value="ECO:0007669"/>
    <property type="project" value="UniProtKB-KW"/>
</dbReference>
<dbReference type="GO" id="GO:0005506">
    <property type="term" value="F:iron ion binding"/>
    <property type="evidence" value="ECO:0007669"/>
    <property type="project" value="UniProtKB-UniRule"/>
</dbReference>
<dbReference type="GO" id="GO:0051536">
    <property type="term" value="F:iron-sulfur cluster binding"/>
    <property type="evidence" value="ECO:0007669"/>
    <property type="project" value="UniProtKB-KW"/>
</dbReference>
<dbReference type="Gene3D" id="1.10.10.10">
    <property type="entry name" value="Winged helix-like DNA-binding domain superfamily/Winged helix DNA-binding domain"/>
    <property type="match status" value="1"/>
</dbReference>
<dbReference type="HAMAP" id="MF_01586">
    <property type="entry name" value="FeoC"/>
    <property type="match status" value="1"/>
</dbReference>
<dbReference type="InterPro" id="IPR023732">
    <property type="entry name" value="FeoC"/>
</dbReference>
<dbReference type="InterPro" id="IPR015102">
    <property type="entry name" value="Tscrpt_reg_HTH_FeoC"/>
</dbReference>
<dbReference type="InterPro" id="IPR036388">
    <property type="entry name" value="WH-like_DNA-bd_sf"/>
</dbReference>
<dbReference type="InterPro" id="IPR036390">
    <property type="entry name" value="WH_DNA-bd_sf"/>
</dbReference>
<dbReference type="NCBIfam" id="NF011960">
    <property type="entry name" value="PRK15431.1"/>
    <property type="match status" value="1"/>
</dbReference>
<dbReference type="Pfam" id="PF09012">
    <property type="entry name" value="FeoC"/>
    <property type="match status" value="1"/>
</dbReference>
<dbReference type="SUPFAM" id="SSF46785">
    <property type="entry name" value="Winged helix' DNA-binding domain"/>
    <property type="match status" value="1"/>
</dbReference>
<organism>
    <name type="scientific">Escherichia coli O6:H1 (strain CFT073 / ATCC 700928 / UPEC)</name>
    <dbReference type="NCBI Taxonomy" id="199310"/>
    <lineage>
        <taxon>Bacteria</taxon>
        <taxon>Pseudomonadati</taxon>
        <taxon>Pseudomonadota</taxon>
        <taxon>Gammaproteobacteria</taxon>
        <taxon>Enterobacterales</taxon>
        <taxon>Enterobacteriaceae</taxon>
        <taxon>Escherichia</taxon>
    </lineage>
</organism>
<evidence type="ECO:0000255" key="1">
    <source>
        <dbReference type="HAMAP-Rule" id="MF_01586"/>
    </source>
</evidence>
<evidence type="ECO:0000305" key="2"/>
<proteinExistence type="inferred from homology"/>
<name>FEOC_ECOL6</name>
<protein>
    <recommendedName>
        <fullName evidence="1">Probable [Fe-S]-dependent transcriptional repressor</fullName>
    </recommendedName>
</protein>
<gene>
    <name evidence="1" type="primary">feoC</name>
    <name type="ordered locus">c4187</name>
</gene>
<sequence>MASLIQVRDLLALRGRMEAAQISQTLNTPQPMINAMLKQLESMGKAVRIQEEPDGCLSGSCKSCPEGKACLHEWWALR</sequence>
<feature type="chain" id="PRO_0000313059" description="Probable [Fe-S]-dependent transcriptional repressor">
    <location>
        <begin position="1"/>
        <end position="78"/>
    </location>
</feature>
<feature type="binding site" evidence="1">
    <location>
        <position position="56"/>
    </location>
    <ligand>
        <name>iron-sulfur cluster</name>
        <dbReference type="ChEBI" id="CHEBI:30408"/>
    </ligand>
</feature>
<feature type="binding site" evidence="1">
    <location>
        <position position="61"/>
    </location>
    <ligand>
        <name>iron-sulfur cluster</name>
        <dbReference type="ChEBI" id="CHEBI:30408"/>
    </ligand>
</feature>
<feature type="binding site" evidence="1">
    <location>
        <position position="64"/>
    </location>
    <ligand>
        <name>iron-sulfur cluster</name>
        <dbReference type="ChEBI" id="CHEBI:30408"/>
    </ligand>
</feature>
<feature type="binding site" evidence="1">
    <location>
        <position position="70"/>
    </location>
    <ligand>
        <name>iron-sulfur cluster</name>
        <dbReference type="ChEBI" id="CHEBI:30408"/>
    </ligand>
</feature>
<keyword id="KW-0238">DNA-binding</keyword>
<keyword id="KW-0408">Iron</keyword>
<keyword id="KW-0411">Iron-sulfur</keyword>
<keyword id="KW-0479">Metal-binding</keyword>
<keyword id="KW-1185">Reference proteome</keyword>
<keyword id="KW-0678">Repressor</keyword>
<keyword id="KW-0804">Transcription</keyword>
<keyword id="KW-0805">Transcription regulation</keyword>
<accession>Q8FCT6</accession>